<gene>
    <name evidence="1" type="primary">nagB</name>
    <name type="ordered locus">BC_4054</name>
</gene>
<organism>
    <name type="scientific">Bacillus cereus (strain ATCC 14579 / DSM 31 / CCUG 7414 / JCM 2152 / NBRC 15305 / NCIMB 9373 / NCTC 2599 / NRRL B-3711)</name>
    <dbReference type="NCBI Taxonomy" id="226900"/>
    <lineage>
        <taxon>Bacteria</taxon>
        <taxon>Bacillati</taxon>
        <taxon>Bacillota</taxon>
        <taxon>Bacilli</taxon>
        <taxon>Bacillales</taxon>
        <taxon>Bacillaceae</taxon>
        <taxon>Bacillus</taxon>
        <taxon>Bacillus cereus group</taxon>
    </lineage>
</organism>
<dbReference type="EC" id="3.5.99.6" evidence="1"/>
<dbReference type="EMBL" id="AE016877">
    <property type="protein sequence ID" value="AAP10973.1"/>
    <property type="molecule type" value="Genomic_DNA"/>
</dbReference>
<dbReference type="RefSeq" id="NP_833772.1">
    <property type="nucleotide sequence ID" value="NC_004722.1"/>
</dbReference>
<dbReference type="RefSeq" id="WP_001024210.1">
    <property type="nucleotide sequence ID" value="NZ_CP138336.1"/>
</dbReference>
<dbReference type="SMR" id="Q819D1"/>
<dbReference type="STRING" id="226900.BC_4054"/>
<dbReference type="KEGG" id="bce:BC4054"/>
<dbReference type="PATRIC" id="fig|226900.8.peg.4185"/>
<dbReference type="HOGENOM" id="CLU_049611_1_0_9"/>
<dbReference type="OrthoDB" id="9791139at2"/>
<dbReference type="UniPathway" id="UPA00629">
    <property type="reaction ID" value="UER00684"/>
</dbReference>
<dbReference type="Proteomes" id="UP000001417">
    <property type="component" value="Chromosome"/>
</dbReference>
<dbReference type="GO" id="GO:0005737">
    <property type="term" value="C:cytoplasm"/>
    <property type="evidence" value="ECO:0000318"/>
    <property type="project" value="GO_Central"/>
</dbReference>
<dbReference type="GO" id="GO:0004342">
    <property type="term" value="F:glucosamine-6-phosphate deaminase activity"/>
    <property type="evidence" value="ECO:0000318"/>
    <property type="project" value="GO_Central"/>
</dbReference>
<dbReference type="GO" id="GO:0042802">
    <property type="term" value="F:identical protein binding"/>
    <property type="evidence" value="ECO:0000318"/>
    <property type="project" value="GO_Central"/>
</dbReference>
<dbReference type="GO" id="GO:0005975">
    <property type="term" value="P:carbohydrate metabolic process"/>
    <property type="evidence" value="ECO:0007669"/>
    <property type="project" value="InterPro"/>
</dbReference>
<dbReference type="GO" id="GO:0006043">
    <property type="term" value="P:glucosamine catabolic process"/>
    <property type="evidence" value="ECO:0000318"/>
    <property type="project" value="GO_Central"/>
</dbReference>
<dbReference type="GO" id="GO:0006046">
    <property type="term" value="P:N-acetylglucosamine catabolic process"/>
    <property type="evidence" value="ECO:0000318"/>
    <property type="project" value="GO_Central"/>
</dbReference>
<dbReference type="GO" id="GO:0019262">
    <property type="term" value="P:N-acetylneuraminate catabolic process"/>
    <property type="evidence" value="ECO:0000318"/>
    <property type="project" value="GO_Central"/>
</dbReference>
<dbReference type="CDD" id="cd01399">
    <property type="entry name" value="GlcN6P_deaminase"/>
    <property type="match status" value="1"/>
</dbReference>
<dbReference type="FunFam" id="3.40.50.1360:FF:000003">
    <property type="entry name" value="Glucosamine-6-phosphate deaminase"/>
    <property type="match status" value="1"/>
</dbReference>
<dbReference type="Gene3D" id="3.40.50.1360">
    <property type="match status" value="1"/>
</dbReference>
<dbReference type="HAMAP" id="MF_01241">
    <property type="entry name" value="GlcN6P_deamin"/>
    <property type="match status" value="1"/>
</dbReference>
<dbReference type="InterPro" id="IPR006148">
    <property type="entry name" value="Glc/Gal-6P_isomerase"/>
</dbReference>
<dbReference type="InterPro" id="IPR004547">
    <property type="entry name" value="Glucosamine6P_isomerase"/>
</dbReference>
<dbReference type="InterPro" id="IPR018321">
    <property type="entry name" value="Glucosamine6P_isomerase_CS"/>
</dbReference>
<dbReference type="InterPro" id="IPR037171">
    <property type="entry name" value="NagB/RpiA_transferase-like"/>
</dbReference>
<dbReference type="NCBIfam" id="TIGR00502">
    <property type="entry name" value="nagB"/>
    <property type="match status" value="1"/>
</dbReference>
<dbReference type="NCBIfam" id="NF001682">
    <property type="entry name" value="PRK00443.1-1"/>
    <property type="match status" value="1"/>
</dbReference>
<dbReference type="PANTHER" id="PTHR11280">
    <property type="entry name" value="GLUCOSAMINE-6-PHOSPHATE ISOMERASE"/>
    <property type="match status" value="1"/>
</dbReference>
<dbReference type="PANTHER" id="PTHR11280:SF5">
    <property type="entry name" value="GLUCOSAMINE-6-PHOSPHATE ISOMERASE"/>
    <property type="match status" value="1"/>
</dbReference>
<dbReference type="Pfam" id="PF01182">
    <property type="entry name" value="Glucosamine_iso"/>
    <property type="match status" value="1"/>
</dbReference>
<dbReference type="SUPFAM" id="SSF100950">
    <property type="entry name" value="NagB/RpiA/CoA transferase-like"/>
    <property type="match status" value="1"/>
</dbReference>
<dbReference type="PROSITE" id="PS01161">
    <property type="entry name" value="GLC_GALNAC_ISOMERASE"/>
    <property type="match status" value="1"/>
</dbReference>
<proteinExistence type="inferred from homology"/>
<feature type="chain" id="PRO_0000160130" description="Glucosamine-6-phosphate deaminase">
    <location>
        <begin position="1"/>
        <end position="262"/>
    </location>
</feature>
<feature type="active site" description="Proton acceptor; for enolization step" evidence="1">
    <location>
        <position position="63"/>
    </location>
</feature>
<feature type="active site" description="For ring-opening step" evidence="1">
    <location>
        <position position="129"/>
    </location>
</feature>
<feature type="active site" description="Proton acceptor; for ring-opening step" evidence="1">
    <location>
        <position position="131"/>
    </location>
</feature>
<feature type="active site" description="For ring-opening step" evidence="1">
    <location>
        <position position="136"/>
    </location>
</feature>
<sequence length="262" mass="29103">MNILVVKTPEELAEAGYKLIEEVVKTKENPTLGMATGSSPLGIYAEMRKNKLDTSRVTTVNLDEYVNLPHEDKNSYHYFMQEQLFDHLPFKQTYVPNGMASDLEEECKRYESILAANPVDLQILGIGENGHIGFNEPGTPFNSPTNIVELTESTRQANLRFFEKEEDVPTHAITMGIGSIMKAKQVLLVAMGSKKAEAVKELLQGEYSEECPATVLQRHPNVTVIADQEALSLCSEAIADEHRQVFTISDLLSDSRVGETAN</sequence>
<keyword id="KW-0119">Carbohydrate metabolism</keyword>
<keyword id="KW-0378">Hydrolase</keyword>
<keyword id="KW-1185">Reference proteome</keyword>
<comment type="function">
    <text evidence="1">Catalyzes the reversible isomerization-deamination of glucosamine 6-phosphate (GlcN6P) to form fructose 6-phosphate (Fru6P) and ammonium ion.</text>
</comment>
<comment type="catalytic activity">
    <reaction evidence="1">
        <text>alpha-D-glucosamine 6-phosphate + H2O = beta-D-fructose 6-phosphate + NH4(+)</text>
        <dbReference type="Rhea" id="RHEA:12172"/>
        <dbReference type="ChEBI" id="CHEBI:15377"/>
        <dbReference type="ChEBI" id="CHEBI:28938"/>
        <dbReference type="ChEBI" id="CHEBI:57634"/>
        <dbReference type="ChEBI" id="CHEBI:75989"/>
        <dbReference type="EC" id="3.5.99.6"/>
    </reaction>
</comment>
<comment type="pathway">
    <text evidence="1">Amino-sugar metabolism; N-acetylneuraminate degradation; D-fructose 6-phosphate from N-acetylneuraminate: step 5/5.</text>
</comment>
<comment type="similarity">
    <text evidence="1">Belongs to the glucosamine/galactosamine-6-phosphate isomerase family. NagB subfamily.</text>
</comment>
<evidence type="ECO:0000255" key="1">
    <source>
        <dbReference type="HAMAP-Rule" id="MF_01241"/>
    </source>
</evidence>
<name>NAGB_BACCR</name>
<reference key="1">
    <citation type="journal article" date="2003" name="Nature">
        <title>Genome sequence of Bacillus cereus and comparative analysis with Bacillus anthracis.</title>
        <authorList>
            <person name="Ivanova N."/>
            <person name="Sorokin A."/>
            <person name="Anderson I."/>
            <person name="Galleron N."/>
            <person name="Candelon B."/>
            <person name="Kapatral V."/>
            <person name="Bhattacharyya A."/>
            <person name="Reznik G."/>
            <person name="Mikhailova N."/>
            <person name="Lapidus A."/>
            <person name="Chu L."/>
            <person name="Mazur M."/>
            <person name="Goltsman E."/>
            <person name="Larsen N."/>
            <person name="D'Souza M."/>
            <person name="Walunas T."/>
            <person name="Grechkin Y."/>
            <person name="Pusch G."/>
            <person name="Haselkorn R."/>
            <person name="Fonstein M."/>
            <person name="Ehrlich S.D."/>
            <person name="Overbeek R."/>
            <person name="Kyrpides N.C."/>
        </authorList>
    </citation>
    <scope>NUCLEOTIDE SEQUENCE [LARGE SCALE GENOMIC DNA]</scope>
    <source>
        <strain>ATCC 14579 / DSM 31 / CCUG 7414 / JCM 2152 / NBRC 15305 / NCIMB 9373 / NCTC 2599 / NRRL B-3711</strain>
    </source>
</reference>
<protein>
    <recommendedName>
        <fullName evidence="1">Glucosamine-6-phosphate deaminase</fullName>
        <ecNumber evidence="1">3.5.99.6</ecNumber>
    </recommendedName>
    <alternativeName>
        <fullName evidence="1">GlcN6P deaminase</fullName>
        <shortName evidence="1">GNPDA</shortName>
    </alternativeName>
    <alternativeName>
        <fullName evidence="1">Glucosamine-6-phosphate isomerase</fullName>
    </alternativeName>
</protein>
<accession>Q819D1</accession>